<keyword id="KW-0004">4Fe-4S</keyword>
<keyword id="KW-0148">Chlorophyll</keyword>
<keyword id="KW-0150">Chloroplast</keyword>
<keyword id="KW-0157">Chromophore</keyword>
<keyword id="KW-0249">Electron transport</keyword>
<keyword id="KW-0408">Iron</keyword>
<keyword id="KW-0411">Iron-sulfur</keyword>
<keyword id="KW-0460">Magnesium</keyword>
<keyword id="KW-0472">Membrane</keyword>
<keyword id="KW-0479">Metal-binding</keyword>
<keyword id="KW-0560">Oxidoreductase</keyword>
<keyword id="KW-0602">Photosynthesis</keyword>
<keyword id="KW-0603">Photosystem I</keyword>
<keyword id="KW-0934">Plastid</keyword>
<keyword id="KW-0793">Thylakoid</keyword>
<keyword id="KW-0812">Transmembrane</keyword>
<keyword id="KW-1133">Transmembrane helix</keyword>
<keyword id="KW-0813">Transport</keyword>
<comment type="function">
    <text>PsaA and PsaB bind P700, the primary electron donor of photosystem I (PSI), as well as the electron acceptors A0, A1 and FX. PSI is a plastocyanin-ferredoxin oxidoreductase, converting photonic excitation into a charge separation, which transfers an electron from the donor P700 chlorophyll pair to the spectroscopically characterized acceptors A0, A1, FX, FA and FB in turn. Oxidized P700 is reduced on the lumenal side of the thylakoid membrane by plastocyanin.</text>
</comment>
<comment type="catalytic activity">
    <reaction evidence="1">
        <text>reduced [plastocyanin] + hnu + oxidized [2Fe-2S]-[ferredoxin] = oxidized [plastocyanin] + reduced [2Fe-2S]-[ferredoxin]</text>
        <dbReference type="Rhea" id="RHEA:30407"/>
        <dbReference type="Rhea" id="RHEA-COMP:10000"/>
        <dbReference type="Rhea" id="RHEA-COMP:10001"/>
        <dbReference type="Rhea" id="RHEA-COMP:10039"/>
        <dbReference type="Rhea" id="RHEA-COMP:10040"/>
        <dbReference type="ChEBI" id="CHEBI:29036"/>
        <dbReference type="ChEBI" id="CHEBI:30212"/>
        <dbReference type="ChEBI" id="CHEBI:33737"/>
        <dbReference type="ChEBI" id="CHEBI:33738"/>
        <dbReference type="ChEBI" id="CHEBI:49552"/>
        <dbReference type="EC" id="1.97.1.12"/>
    </reaction>
</comment>
<comment type="cofactor">
    <text evidence="1">P700 is a chlorophyll a/chlorophyll a' dimer, A0 is one or more chlorophyll a, A1 is one or both phylloquinones and FX is a shared 4Fe-4S iron-sulfur center.</text>
</comment>
<comment type="subunit">
    <text evidence="1">The PsaA/B heterodimer binds the P700 chlorophyll special pair and subsequent electron acceptors. PSI consists of a core antenna complex that captures photons, and an electron transfer chain that converts photonic excitation into a charge separation. The eukaryotic PSI reaction center is composed of at least 11 subunits.</text>
</comment>
<comment type="subcellular location">
    <subcellularLocation>
        <location evidence="1">Plastid</location>
        <location evidence="1">Chloroplast thylakoid membrane</location>
        <topology evidence="1">Multi-pass membrane protein</topology>
    </subcellularLocation>
</comment>
<comment type="similarity">
    <text evidence="1">Belongs to the PsaA/PsaB family.</text>
</comment>
<reference key="1">
    <citation type="journal article" date="2006" name="BMC Evol. Biol.">
        <title>Complete plastid genome sequences of Drimys, Liriodendron, and Piper: implications for the phylogenetic relationships of magnoliids.</title>
        <authorList>
            <person name="Cai Z."/>
            <person name="Penaflor C."/>
            <person name="Kuehl J.V."/>
            <person name="Leebens-Mack J."/>
            <person name="Carlson J.E."/>
            <person name="dePamphilis C.W."/>
            <person name="Boore J.L."/>
            <person name="Jansen R.K."/>
        </authorList>
    </citation>
    <scope>NUCLEOTIDE SEQUENCE [LARGE SCALE GENOMIC DNA]</scope>
</reference>
<accession>Q06GZ7</accession>
<feature type="chain" id="PRO_0000275942" description="Photosystem I P700 chlorophyll a apoprotein A1">
    <location>
        <begin position="1"/>
        <end position="750"/>
    </location>
</feature>
<feature type="transmembrane region" description="Helical; Name=I" evidence="1">
    <location>
        <begin position="70"/>
        <end position="93"/>
    </location>
</feature>
<feature type="transmembrane region" description="Helical; Name=II" evidence="1">
    <location>
        <begin position="156"/>
        <end position="179"/>
    </location>
</feature>
<feature type="transmembrane region" description="Helical; Name=III" evidence="1">
    <location>
        <begin position="195"/>
        <end position="219"/>
    </location>
</feature>
<feature type="transmembrane region" description="Helical; Name=IV" evidence="1">
    <location>
        <begin position="291"/>
        <end position="309"/>
    </location>
</feature>
<feature type="transmembrane region" description="Helical; Name=V" evidence="1">
    <location>
        <begin position="346"/>
        <end position="369"/>
    </location>
</feature>
<feature type="transmembrane region" description="Helical; Name=VI" evidence="1">
    <location>
        <begin position="385"/>
        <end position="411"/>
    </location>
</feature>
<feature type="transmembrane region" description="Helical; Name=VII" evidence="1">
    <location>
        <begin position="433"/>
        <end position="455"/>
    </location>
</feature>
<feature type="transmembrane region" description="Helical; Name=VIII" evidence="1">
    <location>
        <begin position="531"/>
        <end position="549"/>
    </location>
</feature>
<feature type="transmembrane region" description="Helical; Name=IX" evidence="1">
    <location>
        <begin position="589"/>
        <end position="610"/>
    </location>
</feature>
<feature type="transmembrane region" description="Helical; Name=X" evidence="1">
    <location>
        <begin position="664"/>
        <end position="686"/>
    </location>
</feature>
<feature type="transmembrane region" description="Helical; Name=XI" evidence="1">
    <location>
        <begin position="724"/>
        <end position="744"/>
    </location>
</feature>
<feature type="binding site" evidence="1">
    <location>
        <position position="573"/>
    </location>
    <ligand>
        <name>[4Fe-4S] cluster</name>
        <dbReference type="ChEBI" id="CHEBI:49883"/>
        <note>ligand shared between dimeric partners</note>
    </ligand>
</feature>
<feature type="binding site" evidence="1">
    <location>
        <position position="582"/>
    </location>
    <ligand>
        <name>[4Fe-4S] cluster</name>
        <dbReference type="ChEBI" id="CHEBI:49883"/>
        <note>ligand shared between dimeric partners</note>
    </ligand>
</feature>
<feature type="binding site" description="axial binding residue" evidence="1">
    <location>
        <position position="675"/>
    </location>
    <ligand>
        <name>chlorophyll a'</name>
        <dbReference type="ChEBI" id="CHEBI:189419"/>
        <label>A1</label>
    </ligand>
    <ligandPart>
        <name>Mg</name>
        <dbReference type="ChEBI" id="CHEBI:25107"/>
    </ligandPart>
</feature>
<feature type="binding site" description="axial binding residue" evidence="1">
    <location>
        <position position="683"/>
    </location>
    <ligand>
        <name>chlorophyll a</name>
        <dbReference type="ChEBI" id="CHEBI:58416"/>
        <label>A3</label>
    </ligand>
    <ligandPart>
        <name>Mg</name>
        <dbReference type="ChEBI" id="CHEBI:25107"/>
    </ligandPart>
</feature>
<feature type="binding site" evidence="1">
    <location>
        <position position="691"/>
    </location>
    <ligand>
        <name>chlorophyll a</name>
        <dbReference type="ChEBI" id="CHEBI:58416"/>
        <label>A3</label>
    </ligand>
</feature>
<feature type="binding site" evidence="1">
    <location>
        <position position="692"/>
    </location>
    <ligand>
        <name>phylloquinone</name>
        <dbReference type="ChEBI" id="CHEBI:18067"/>
        <label>A</label>
    </ligand>
</feature>
<organism>
    <name type="scientific">Drimys granadensis</name>
    <dbReference type="NCBI Taxonomy" id="224735"/>
    <lineage>
        <taxon>Eukaryota</taxon>
        <taxon>Viridiplantae</taxon>
        <taxon>Streptophyta</taxon>
        <taxon>Embryophyta</taxon>
        <taxon>Tracheophyta</taxon>
        <taxon>Spermatophyta</taxon>
        <taxon>Magnoliopsida</taxon>
        <taxon>Magnoliidae</taxon>
        <taxon>Canellales</taxon>
        <taxon>Winteraceae</taxon>
        <taxon>Drimys</taxon>
    </lineage>
</organism>
<protein>
    <recommendedName>
        <fullName evidence="1">Photosystem I P700 chlorophyll a apoprotein A1</fullName>
        <ecNumber evidence="1">1.97.1.12</ecNumber>
    </recommendedName>
    <alternativeName>
        <fullName evidence="1">PSI-A</fullName>
    </alternativeName>
    <alternativeName>
        <fullName evidence="1">PsaA</fullName>
    </alternativeName>
</protein>
<gene>
    <name evidence="1" type="primary">psaA</name>
</gene>
<sequence length="750" mass="83103">MIIRSPEPEVKILVDRDPVKTSFEEWARPGHFSRTIAKGPETTTWIWNLHADAHDFDSHTSDLEEISRKVFSAHFGQLSIIFLWLSGMYFHGARFSNYEAWLSDPTHIGPSAQVVWPIVGQEILNGDVGGGFRGIQITSGFFQIWRASGITSELQLYCTAIGALVFAGLMLFAGWFHYHKAAPKLAWFQDVESMLNHHLAGLLGLGSLSWAGHQVHVSLPINQFLDAGVDPKEIPLPHEFILNRDLLAQLYPSFAEGATPFFTLNWSKYAEFLTFRGGLDPVTGGLWLTDIAHHHLAIAILFLIAGHMYRTNWGIGHGLKDILEAHKGPFTGQGHKGLYEILTTSWHAQLSLNLAMLGSLTIVVAHHMYSMPPYPYLAIDYGTQLSLFTHHMWIGGFLIVGAAAHAAIFMVRDYDPTTRYNDLLDRVLRHRDAIISHLNWACIFLGFHSFGLYIHNDTMSALGRPQDMFSDTAIQLQPIFAQWVQNTHALAPGATAPGATTSTSLTWGGGDLIAVGGKVALLPIPLGTADFLVHHIHAFTIHVTVLILLKGVLFARSSRLIPDKANLGFRFPCDGPGRGGTCQVSAWDHVFLGLFWMYNAISVVIFHFSWKMQSDVWGSISDQGVVTHITGGNFAQSSITINGWLRDFLWAQASQVIQSYGSSLSAYGLFFLGAHFVWAFSLMFLFSGRGYWQELIESIVWAHNKLKVAPATQPRALSIVQGRAVGVTHYLLGGIATTWAFFLARIIAVG</sequence>
<dbReference type="EC" id="1.97.1.12" evidence="1"/>
<dbReference type="EMBL" id="DQ887676">
    <property type="protein sequence ID" value="ABH88297.1"/>
    <property type="molecule type" value="Genomic_DNA"/>
</dbReference>
<dbReference type="RefSeq" id="YP_784386.1">
    <property type="nucleotide sequence ID" value="NC_008456.1"/>
</dbReference>
<dbReference type="SMR" id="Q06GZ7"/>
<dbReference type="GeneID" id="4363550"/>
<dbReference type="GO" id="GO:0009535">
    <property type="term" value="C:chloroplast thylakoid membrane"/>
    <property type="evidence" value="ECO:0007669"/>
    <property type="project" value="UniProtKB-SubCell"/>
</dbReference>
<dbReference type="GO" id="GO:0009522">
    <property type="term" value="C:photosystem I"/>
    <property type="evidence" value="ECO:0007669"/>
    <property type="project" value="UniProtKB-KW"/>
</dbReference>
<dbReference type="GO" id="GO:0051539">
    <property type="term" value="F:4 iron, 4 sulfur cluster binding"/>
    <property type="evidence" value="ECO:0007669"/>
    <property type="project" value="UniProtKB-KW"/>
</dbReference>
<dbReference type="GO" id="GO:0016168">
    <property type="term" value="F:chlorophyll binding"/>
    <property type="evidence" value="ECO:0007669"/>
    <property type="project" value="UniProtKB-KW"/>
</dbReference>
<dbReference type="GO" id="GO:0009055">
    <property type="term" value="F:electron transfer activity"/>
    <property type="evidence" value="ECO:0007669"/>
    <property type="project" value="UniProtKB-UniRule"/>
</dbReference>
<dbReference type="GO" id="GO:0000287">
    <property type="term" value="F:magnesium ion binding"/>
    <property type="evidence" value="ECO:0007669"/>
    <property type="project" value="UniProtKB-UniRule"/>
</dbReference>
<dbReference type="GO" id="GO:0016491">
    <property type="term" value="F:oxidoreductase activity"/>
    <property type="evidence" value="ECO:0007669"/>
    <property type="project" value="UniProtKB-KW"/>
</dbReference>
<dbReference type="GO" id="GO:0015979">
    <property type="term" value="P:photosynthesis"/>
    <property type="evidence" value="ECO:0007669"/>
    <property type="project" value="UniProtKB-UniRule"/>
</dbReference>
<dbReference type="FunFam" id="1.20.1130.10:FF:000001">
    <property type="entry name" value="Photosystem I P700 chlorophyll a apoprotein A2"/>
    <property type="match status" value="1"/>
</dbReference>
<dbReference type="Gene3D" id="1.20.1130.10">
    <property type="entry name" value="Photosystem I PsaA/PsaB"/>
    <property type="match status" value="1"/>
</dbReference>
<dbReference type="HAMAP" id="MF_00458">
    <property type="entry name" value="PSI_PsaA"/>
    <property type="match status" value="1"/>
</dbReference>
<dbReference type="InterPro" id="IPR006243">
    <property type="entry name" value="PSI_PsaA"/>
</dbReference>
<dbReference type="InterPro" id="IPR001280">
    <property type="entry name" value="PSI_PsaA/B"/>
</dbReference>
<dbReference type="InterPro" id="IPR020586">
    <property type="entry name" value="PSI_PsaA/B_CS"/>
</dbReference>
<dbReference type="InterPro" id="IPR036408">
    <property type="entry name" value="PSI_PsaA/B_sf"/>
</dbReference>
<dbReference type="NCBIfam" id="TIGR01335">
    <property type="entry name" value="psaA"/>
    <property type="match status" value="1"/>
</dbReference>
<dbReference type="PANTHER" id="PTHR30128">
    <property type="entry name" value="OUTER MEMBRANE PROTEIN, OMPA-RELATED"/>
    <property type="match status" value="1"/>
</dbReference>
<dbReference type="PANTHER" id="PTHR30128:SF19">
    <property type="entry name" value="PHOTOSYSTEM I P700 CHLOROPHYLL A APOPROTEIN A1-RELATED"/>
    <property type="match status" value="1"/>
</dbReference>
<dbReference type="Pfam" id="PF00223">
    <property type="entry name" value="PsaA_PsaB"/>
    <property type="match status" value="1"/>
</dbReference>
<dbReference type="PIRSF" id="PIRSF002905">
    <property type="entry name" value="PSI_A"/>
    <property type="match status" value="1"/>
</dbReference>
<dbReference type="PRINTS" id="PR00257">
    <property type="entry name" value="PHOTSYSPSAAB"/>
</dbReference>
<dbReference type="SUPFAM" id="SSF81558">
    <property type="entry name" value="Photosystem I subunits PsaA/PsaB"/>
    <property type="match status" value="1"/>
</dbReference>
<dbReference type="PROSITE" id="PS00419">
    <property type="entry name" value="PHOTOSYSTEM_I_PSAAB"/>
    <property type="match status" value="1"/>
</dbReference>
<evidence type="ECO:0000255" key="1">
    <source>
        <dbReference type="HAMAP-Rule" id="MF_00458"/>
    </source>
</evidence>
<proteinExistence type="inferred from homology"/>
<name>PSAA_DRIGR</name>
<geneLocation type="chloroplast"/>